<sequence length="359" mass="37708">MASELAMSGSDLPTSPLAMEYVNDFDLMKFEVKKEPVETDRIISQCGRLIAGGSLSSTPMSTPCSSVPPSPSFSAPSPGSGTDQKTHLEDYYWMTGYPQQLNPEALGFSPEDAVEALINSSHHPLPGAFDGYARGQQLAAAAGGSVPAEEMGSAAAVVSAVIAAAAAQGGAPHYHHHHHHPHHGGGGGGGGHPHGAAPGSAPPSSASSSAAGSGGGGGGGGGGAGGLHHPHHGGGGGGGGLHFDDRFSDEQLVTMSVRELNRQLRGVSKEEVIRLKQKRRTLKNRGYAQSCRFKRVQQRHVLESEKNQLLQQVEHLKQEISRLVRERDAYKEKYEKLVSNGFRENGSSSDNPSSPEFFM</sequence>
<reference key="1">
    <citation type="journal article" date="1994" name="Mol. Cell. Biol.">
        <title>MafB,a new Maf family transcription activator that can associate with Maf and Fos but not with Jun.</title>
        <authorList>
            <person name="Kataoka K."/>
            <person name="Fujiwara K.T."/>
            <person name="Noda M."/>
            <person name="Nishizawa M."/>
        </authorList>
    </citation>
    <scope>NUCLEOTIDE SEQUENCE [GENOMIC DNA / MRNA] (ISOFORMS 1 AND 2)</scope>
    <scope>TISSUE SPECIFICITY</scope>
</reference>
<reference key="2">
    <citation type="journal article" date="2001" name="J. Biol. Chem.">
        <title>A set of Hox proteins interact with the Maf oncoprotein to inhibit its DNA binding, transactivation, and transforming activities.</title>
        <authorList>
            <person name="Kataoka K."/>
            <person name="Yoshitomo-Nakagawa K."/>
            <person name="Shioda S."/>
            <person name="Nishizawa M."/>
        </authorList>
    </citation>
    <scope>SUBUNIT</scope>
    <scope>INTERACTION WITH HOXD12; PAX6 AND PRRX1</scope>
    <scope>MUTAGENESIS OF LEU-309 AND LEU-316</scope>
</reference>
<reference key="3">
    <citation type="journal article" date="2002" name="Genes Cells">
        <title>Characterization of the chicken L-Maf, MafB and c-Maf in crystallin gene regulation and lens differentiation.</title>
        <authorList>
            <person name="Yoshida T."/>
            <person name="Yasuda K."/>
        </authorList>
    </citation>
    <scope>FUNCTION</scope>
    <scope>DNA-BINDING</scope>
</reference>
<accession>Q789F3</accession>
<accession>Q789F2</accession>
<accession>Q90786</accession>
<accession>Q92171</accession>
<name>MAF_CHICK</name>
<comment type="function">
    <text evidence="4">Acts as a transcriptional activator or repressor. Positively regulates the expression of alpha A crystallin genes during lens fiber cell differentiation. Binds to Maf recognition elements (MARE).</text>
</comment>
<comment type="subunit">
    <text evidence="3">Homodimer or heterodimer. Binds DNA as a homodimer or a heterodimer. Interacts with HOXD12, PAX6 and PRRX1; interaction is direct and inhibits its DNA-binding and transactivating activity.</text>
</comment>
<comment type="subcellular location">
    <subcellularLocation>
        <location evidence="1">Nucleus</location>
    </subcellularLocation>
</comment>
<comment type="alternative products">
    <event type="alternative splicing"/>
    <isoform>
        <id>Q789F3-1</id>
        <name>1</name>
        <name>Short</name>
        <sequence type="displayed"/>
    </isoform>
    <isoform>
        <id>Q789F3-2</id>
        <name>2</name>
        <name>Long</name>
        <sequence type="described" ref="VSP_036410"/>
    </isoform>
</comment>
<comment type="tissue specificity">
    <text evidence="5">Expressed in kidney, brain, lung, gut, mesenterium, testis and ovary.</text>
</comment>
<comment type="developmental stage">
    <text>Expressed in the lens placode at stage 14. Expressed at stage 18 when the invaginating lens placode closes to form the lens vesicle.</text>
</comment>
<comment type="domain">
    <text>The basic region and the leucine zipper structure are necessary for association with HOXD12 and PRRX1.</text>
</comment>
<comment type="similarity">
    <text evidence="7">Belongs to the bZIP family. Maf subfamily.</text>
</comment>
<keyword id="KW-0010">Activator</keyword>
<keyword id="KW-0025">Alternative splicing</keyword>
<keyword id="KW-0238">DNA-binding</keyword>
<keyword id="KW-0539">Nucleus</keyword>
<keyword id="KW-1185">Reference proteome</keyword>
<keyword id="KW-0678">Repressor</keyword>
<keyword id="KW-0804">Transcription</keyword>
<keyword id="KW-0805">Transcription regulation</keyword>
<gene>
    <name type="primary">MAF</name>
</gene>
<feature type="chain" id="PRO_0000364082" description="Transcription factor Maf">
    <location>
        <begin position="1"/>
        <end position="359"/>
    </location>
</feature>
<feature type="domain" description="bZIP" evidence="1">
    <location>
        <begin position="274"/>
        <end position="337"/>
    </location>
</feature>
<feature type="region of interest" description="Disordered" evidence="2">
    <location>
        <begin position="57"/>
        <end position="85"/>
    </location>
</feature>
<feature type="region of interest" description="Disordered" evidence="2">
    <location>
        <begin position="169"/>
        <end position="243"/>
    </location>
</feature>
<feature type="region of interest" description="Basic motif" evidence="1">
    <location>
        <begin position="274"/>
        <end position="299"/>
    </location>
</feature>
<feature type="region of interest" description="Leucine-zipper" evidence="1">
    <location>
        <begin position="302"/>
        <end position="323"/>
    </location>
</feature>
<feature type="region of interest" description="Disordered" evidence="2">
    <location>
        <begin position="340"/>
        <end position="359"/>
    </location>
</feature>
<feature type="compositionally biased region" description="Basic residues" evidence="2">
    <location>
        <begin position="173"/>
        <end position="183"/>
    </location>
</feature>
<feature type="compositionally biased region" description="Gly residues" evidence="2">
    <location>
        <begin position="184"/>
        <end position="193"/>
    </location>
</feature>
<feature type="compositionally biased region" description="Low complexity" evidence="2">
    <location>
        <begin position="194"/>
        <end position="211"/>
    </location>
</feature>
<feature type="compositionally biased region" description="Gly residues" evidence="2">
    <location>
        <begin position="212"/>
        <end position="226"/>
    </location>
</feature>
<feature type="compositionally biased region" description="Polar residues" evidence="2">
    <location>
        <begin position="345"/>
        <end position="359"/>
    </location>
</feature>
<feature type="splice variant" id="VSP_036410" description="In isoform 2." evidence="6">
    <original>M</original>
    <variation>MYPRESSTTVM</variation>
    <location>
        <position position="359"/>
    </location>
</feature>
<feature type="mutagenesis site" description="Reduces interaction with HOXD12; in association with P-316." evidence="3">
    <original>L</original>
    <variation>P</variation>
    <location>
        <position position="309"/>
    </location>
</feature>
<feature type="mutagenesis site" description="Reduces interaction with HOXD12; in association with P-309." evidence="3">
    <original>L</original>
    <variation>P</variation>
    <location>
        <position position="316"/>
    </location>
</feature>
<proteinExistence type="evidence at protein level"/>
<evidence type="ECO:0000255" key="1">
    <source>
        <dbReference type="PROSITE-ProRule" id="PRU00978"/>
    </source>
</evidence>
<evidence type="ECO:0000256" key="2">
    <source>
        <dbReference type="SAM" id="MobiDB-lite"/>
    </source>
</evidence>
<evidence type="ECO:0000269" key="3">
    <source>
    </source>
</evidence>
<evidence type="ECO:0000269" key="4">
    <source>
    </source>
</evidence>
<evidence type="ECO:0000269" key="5">
    <source>
    </source>
</evidence>
<evidence type="ECO:0000303" key="6">
    <source>
    </source>
</evidence>
<evidence type="ECO:0000305" key="7"/>
<dbReference type="EMBL" id="D28596">
    <property type="protein sequence ID" value="BAA05935.1"/>
    <property type="molecule type" value="Genomic_DNA"/>
</dbReference>
<dbReference type="EMBL" id="D28596">
    <property type="protein sequence ID" value="BAA05936.1"/>
    <property type="molecule type" value="Genomic_DNA"/>
</dbReference>
<dbReference type="EMBL" id="D28598">
    <property type="protein sequence ID" value="BAA05937.1"/>
    <property type="molecule type" value="mRNA"/>
</dbReference>
<dbReference type="RefSeq" id="NP_001038136.1">
    <molecule id="Q789F3-2"/>
    <property type="nucleotide sequence ID" value="NM_001044671.1"/>
</dbReference>
<dbReference type="RefSeq" id="XP_015148000.1">
    <molecule id="Q789F3-2"/>
    <property type="nucleotide sequence ID" value="XM_015292514.4"/>
</dbReference>
<dbReference type="SMR" id="Q789F3"/>
<dbReference type="FunCoup" id="Q789F3">
    <property type="interactions" value="28"/>
</dbReference>
<dbReference type="MINT" id="Q789F3"/>
<dbReference type="STRING" id="9031.ENSGALP00000041121"/>
<dbReference type="PaxDb" id="9031-ENSGALP00000041121"/>
<dbReference type="Ensembl" id="ENSGALT00010018578.1">
    <molecule id="Q789F3-1"/>
    <property type="protein sequence ID" value="ENSGALP00010010165.1"/>
    <property type="gene ID" value="ENSGALG00010007800.1"/>
</dbReference>
<dbReference type="Ensembl" id="ENSGALT00010018582.1">
    <molecule id="Q789F3-2"/>
    <property type="protein sequence ID" value="ENSGALP00010010169.1"/>
    <property type="gene ID" value="ENSGALG00010007800.1"/>
</dbReference>
<dbReference type="GeneID" id="693248"/>
<dbReference type="KEGG" id="gga:693248"/>
<dbReference type="CTD" id="4094"/>
<dbReference type="VEuPathDB" id="HostDB:geneid_693248"/>
<dbReference type="eggNOG" id="KOG4196">
    <property type="taxonomic scope" value="Eukaryota"/>
</dbReference>
<dbReference type="GeneTree" id="ENSGT00940000161531"/>
<dbReference type="InParanoid" id="Q789F3"/>
<dbReference type="OMA" id="GTVHPHM"/>
<dbReference type="OrthoDB" id="5974330at2759"/>
<dbReference type="PhylomeDB" id="Q789F3"/>
<dbReference type="PRO" id="PR:Q789F3"/>
<dbReference type="Proteomes" id="UP000000539">
    <property type="component" value="Chromosome 11"/>
</dbReference>
<dbReference type="Bgee" id="ENSGALG00000026258">
    <property type="expression patterns" value="Expressed in kidney and 12 other cell types or tissues"/>
</dbReference>
<dbReference type="GO" id="GO:0005737">
    <property type="term" value="C:cytoplasm"/>
    <property type="evidence" value="ECO:0007669"/>
    <property type="project" value="Ensembl"/>
</dbReference>
<dbReference type="GO" id="GO:0005634">
    <property type="term" value="C:nucleus"/>
    <property type="evidence" value="ECO:0000318"/>
    <property type="project" value="GO_Central"/>
</dbReference>
<dbReference type="GO" id="GO:0090575">
    <property type="term" value="C:RNA polymerase II transcription regulator complex"/>
    <property type="evidence" value="ECO:0007669"/>
    <property type="project" value="Ensembl"/>
</dbReference>
<dbReference type="GO" id="GO:0001228">
    <property type="term" value="F:DNA-binding transcription activator activity, RNA polymerase II-specific"/>
    <property type="evidence" value="ECO:0007669"/>
    <property type="project" value="Ensembl"/>
</dbReference>
<dbReference type="GO" id="GO:0000981">
    <property type="term" value="F:DNA-binding transcription factor activity, RNA polymerase II-specific"/>
    <property type="evidence" value="ECO:0000318"/>
    <property type="project" value="GO_Central"/>
</dbReference>
<dbReference type="GO" id="GO:0042802">
    <property type="term" value="F:identical protein binding"/>
    <property type="evidence" value="ECO:0007669"/>
    <property type="project" value="Ensembl"/>
</dbReference>
<dbReference type="GO" id="GO:0000978">
    <property type="term" value="F:RNA polymerase II cis-regulatory region sequence-specific DNA binding"/>
    <property type="evidence" value="ECO:0000318"/>
    <property type="project" value="GO_Central"/>
</dbReference>
<dbReference type="GO" id="GO:0010467">
    <property type="term" value="P:gene expression"/>
    <property type="evidence" value="ECO:0007669"/>
    <property type="project" value="Ensembl"/>
</dbReference>
<dbReference type="GO" id="GO:0048839">
    <property type="term" value="P:inner ear development"/>
    <property type="evidence" value="ECO:0007669"/>
    <property type="project" value="Ensembl"/>
</dbReference>
<dbReference type="GO" id="GO:0070306">
    <property type="term" value="P:lens fiber cell differentiation"/>
    <property type="evidence" value="ECO:0007669"/>
    <property type="project" value="Ensembl"/>
</dbReference>
<dbReference type="GO" id="GO:0030219">
    <property type="term" value="P:megakaryocyte differentiation"/>
    <property type="evidence" value="ECO:0007669"/>
    <property type="project" value="Ensembl"/>
</dbReference>
<dbReference type="GO" id="GO:0000122">
    <property type="term" value="P:negative regulation of transcription by RNA polymerase II"/>
    <property type="evidence" value="ECO:0007669"/>
    <property type="project" value="Ensembl"/>
</dbReference>
<dbReference type="GO" id="GO:0010628">
    <property type="term" value="P:positive regulation of gene expression"/>
    <property type="evidence" value="ECO:0007669"/>
    <property type="project" value="Ensembl"/>
</dbReference>
<dbReference type="GO" id="GO:0032330">
    <property type="term" value="P:regulation of chondrocyte differentiation"/>
    <property type="evidence" value="ECO:0007669"/>
    <property type="project" value="Ensembl"/>
</dbReference>
<dbReference type="GO" id="GO:0006357">
    <property type="term" value="P:regulation of transcription by RNA polymerase II"/>
    <property type="evidence" value="ECO:0000318"/>
    <property type="project" value="GO_Central"/>
</dbReference>
<dbReference type="GO" id="GO:0007584">
    <property type="term" value="P:response to nutrient"/>
    <property type="evidence" value="ECO:0007669"/>
    <property type="project" value="Ensembl"/>
</dbReference>
<dbReference type="CDD" id="cd14718">
    <property type="entry name" value="bZIP_Maf_large"/>
    <property type="match status" value="1"/>
</dbReference>
<dbReference type="FunFam" id="1.20.5.170:FF:000016">
    <property type="entry name" value="MAF bZIP transcription factor"/>
    <property type="match status" value="1"/>
</dbReference>
<dbReference type="Gene3D" id="1.20.5.170">
    <property type="match status" value="1"/>
</dbReference>
<dbReference type="InterPro" id="IPR004827">
    <property type="entry name" value="bZIP"/>
</dbReference>
<dbReference type="InterPro" id="IPR004826">
    <property type="entry name" value="bZIP_Maf"/>
</dbReference>
<dbReference type="InterPro" id="IPR046347">
    <property type="entry name" value="bZIP_sf"/>
</dbReference>
<dbReference type="InterPro" id="IPR013592">
    <property type="entry name" value="Maf_TF_N"/>
</dbReference>
<dbReference type="InterPro" id="IPR008917">
    <property type="entry name" value="TF_DNA-bd_sf"/>
</dbReference>
<dbReference type="InterPro" id="IPR024874">
    <property type="entry name" value="Transcription_factor_Maf_fam"/>
</dbReference>
<dbReference type="PANTHER" id="PTHR10129">
    <property type="entry name" value="TRANSCRIPTION FACTOR MAF"/>
    <property type="match status" value="1"/>
</dbReference>
<dbReference type="PANTHER" id="PTHR10129:SF9">
    <property type="entry name" value="TRANSCRIPTION FACTOR MAF"/>
    <property type="match status" value="1"/>
</dbReference>
<dbReference type="Pfam" id="PF03131">
    <property type="entry name" value="bZIP_Maf"/>
    <property type="match status" value="1"/>
</dbReference>
<dbReference type="Pfam" id="PF08383">
    <property type="entry name" value="Maf_N"/>
    <property type="match status" value="1"/>
</dbReference>
<dbReference type="SMART" id="SM00338">
    <property type="entry name" value="BRLZ"/>
    <property type="match status" value="1"/>
</dbReference>
<dbReference type="SUPFAM" id="SSF47454">
    <property type="entry name" value="A DNA-binding domain in eukaryotic transcription factors"/>
    <property type="match status" value="1"/>
</dbReference>
<dbReference type="SUPFAM" id="SSF57959">
    <property type="entry name" value="Leucine zipper domain"/>
    <property type="match status" value="1"/>
</dbReference>
<dbReference type="PROSITE" id="PS50217">
    <property type="entry name" value="BZIP"/>
    <property type="match status" value="1"/>
</dbReference>
<protein>
    <recommendedName>
        <fullName>Transcription factor Maf</fullName>
    </recommendedName>
    <alternativeName>
        <fullName>V-maf musculoaponeurotic fibrosarcoma oncogene homolog</fullName>
    </alternativeName>
</protein>
<organism>
    <name type="scientific">Gallus gallus</name>
    <name type="common">Chicken</name>
    <dbReference type="NCBI Taxonomy" id="9031"/>
    <lineage>
        <taxon>Eukaryota</taxon>
        <taxon>Metazoa</taxon>
        <taxon>Chordata</taxon>
        <taxon>Craniata</taxon>
        <taxon>Vertebrata</taxon>
        <taxon>Euteleostomi</taxon>
        <taxon>Archelosauria</taxon>
        <taxon>Archosauria</taxon>
        <taxon>Dinosauria</taxon>
        <taxon>Saurischia</taxon>
        <taxon>Theropoda</taxon>
        <taxon>Coelurosauria</taxon>
        <taxon>Aves</taxon>
        <taxon>Neognathae</taxon>
        <taxon>Galloanserae</taxon>
        <taxon>Galliformes</taxon>
        <taxon>Phasianidae</taxon>
        <taxon>Phasianinae</taxon>
        <taxon>Gallus</taxon>
    </lineage>
</organism>